<accession>A9VML1</accession>
<name>Y3106_BACMK</name>
<comment type="similarity">
    <text evidence="1">Belongs to the UPF0303 family.</text>
</comment>
<reference key="1">
    <citation type="journal article" date="2008" name="Chem. Biol. Interact.">
        <title>Extending the Bacillus cereus group genomics to putative food-borne pathogens of different toxicity.</title>
        <authorList>
            <person name="Lapidus A."/>
            <person name="Goltsman E."/>
            <person name="Auger S."/>
            <person name="Galleron N."/>
            <person name="Segurens B."/>
            <person name="Dossat C."/>
            <person name="Land M.L."/>
            <person name="Broussolle V."/>
            <person name="Brillard J."/>
            <person name="Guinebretiere M.-H."/>
            <person name="Sanchis V."/>
            <person name="Nguen-the C."/>
            <person name="Lereclus D."/>
            <person name="Richardson P."/>
            <person name="Wincker P."/>
            <person name="Weissenbach J."/>
            <person name="Ehrlich S.D."/>
            <person name="Sorokin A."/>
        </authorList>
    </citation>
    <scope>NUCLEOTIDE SEQUENCE [LARGE SCALE GENOMIC DNA]</scope>
    <source>
        <strain>KBAB4</strain>
    </source>
</reference>
<evidence type="ECO:0000255" key="1">
    <source>
        <dbReference type="HAMAP-Rule" id="MF_00761"/>
    </source>
</evidence>
<gene>
    <name type="ordered locus">BcerKBAB4_3106</name>
</gene>
<protein>
    <recommendedName>
        <fullName evidence="1">UPF0303 protein BcerKBAB4_3106</fullName>
    </recommendedName>
</protein>
<dbReference type="EMBL" id="CP000903">
    <property type="protein sequence ID" value="ABY44284.1"/>
    <property type="molecule type" value="Genomic_DNA"/>
</dbReference>
<dbReference type="RefSeq" id="WP_002033314.1">
    <property type="nucleotide sequence ID" value="NC_010184.1"/>
</dbReference>
<dbReference type="SMR" id="A9VML1"/>
<dbReference type="KEGG" id="bwe:BcerKBAB4_3106"/>
<dbReference type="eggNOG" id="COG4702">
    <property type="taxonomic scope" value="Bacteria"/>
</dbReference>
<dbReference type="HOGENOM" id="CLU_101036_2_1_9"/>
<dbReference type="Proteomes" id="UP000002154">
    <property type="component" value="Chromosome"/>
</dbReference>
<dbReference type="Gene3D" id="3.30.450.150">
    <property type="entry name" value="Haem-degrading domain"/>
    <property type="match status" value="1"/>
</dbReference>
<dbReference type="HAMAP" id="MF_00761">
    <property type="entry name" value="UPF0303"/>
    <property type="match status" value="1"/>
</dbReference>
<dbReference type="InterPro" id="IPR005624">
    <property type="entry name" value="PduO/GlcC-like"/>
</dbReference>
<dbReference type="InterPro" id="IPR038084">
    <property type="entry name" value="PduO/GlcC-like_sf"/>
</dbReference>
<dbReference type="InterPro" id="IPR010371">
    <property type="entry name" value="YBR137W-like"/>
</dbReference>
<dbReference type="NCBIfam" id="NF002692">
    <property type="entry name" value="PRK02487.1-1"/>
    <property type="match status" value="1"/>
</dbReference>
<dbReference type="NCBIfam" id="NF002696">
    <property type="entry name" value="PRK02487.1-5"/>
    <property type="match status" value="1"/>
</dbReference>
<dbReference type="PANTHER" id="PTHR28255">
    <property type="match status" value="1"/>
</dbReference>
<dbReference type="PANTHER" id="PTHR28255:SF1">
    <property type="entry name" value="UPF0303 PROTEIN YBR137W"/>
    <property type="match status" value="1"/>
</dbReference>
<dbReference type="Pfam" id="PF03928">
    <property type="entry name" value="HbpS-like"/>
    <property type="match status" value="1"/>
</dbReference>
<dbReference type="PIRSF" id="PIRSF008757">
    <property type="entry name" value="UCP008757"/>
    <property type="match status" value="1"/>
</dbReference>
<dbReference type="SUPFAM" id="SSF143744">
    <property type="entry name" value="GlcG-like"/>
    <property type="match status" value="1"/>
</dbReference>
<sequence length="158" mass="17844">MSTSNLSEISKQILIEEETLQFSSFTNEDALQLGLYIVETAKREGKLIAVDIAKNGVQLFHFKMTGTTEENTKWIERKKRVVSLHNHSSYYMQIESEISGVPYHEKYRLDGSEYAAFGGCFPIQIKNVGVIGMITVSGLPPEVDHELVIRAVKNHLNQ</sequence>
<feature type="chain" id="PRO_1000198320" description="UPF0303 protein BcerKBAB4_3106">
    <location>
        <begin position="1"/>
        <end position="158"/>
    </location>
</feature>
<organism>
    <name type="scientific">Bacillus mycoides (strain KBAB4)</name>
    <name type="common">Bacillus weihenstephanensis</name>
    <dbReference type="NCBI Taxonomy" id="315730"/>
    <lineage>
        <taxon>Bacteria</taxon>
        <taxon>Bacillati</taxon>
        <taxon>Bacillota</taxon>
        <taxon>Bacilli</taxon>
        <taxon>Bacillales</taxon>
        <taxon>Bacillaceae</taxon>
        <taxon>Bacillus</taxon>
        <taxon>Bacillus cereus group</taxon>
    </lineage>
</organism>
<proteinExistence type="inferred from homology"/>